<sequence length="348" mass="39133">MGKDYYKILGIPSGANEDEIKKAYRKMALKYHPDKNKEPNAEEKFKEIAEAYDVLSDPKKRGLYDQYGEEGLKTGGGTSGGSSGSFHYTFHGDPHATFASFFGGSNPFDIFFASSRSTRPFSGFDPDDMDVDEDEDPFGAFGRFGFNGLSRGPRRAPEPLYPRRKVQDPPVVHELRVSLEEIYHGSTKRMKITRRRLNPDGRTVRTEDKILHIVIKRGWKEGTKITFPKEGDATPDNIPADIVFVLKDKPHAHFRRDGTNVLYSALISLKEALCGCTVNIPTIDGRVIPLPCNDVIKPGTVKRLRGEGLPFPKVPTQRGDLIVEFKVRFPDRLTPQTRQILKQHLPCS</sequence>
<proteinExistence type="evidence at protein level"/>
<reference key="1">
    <citation type="journal article" date="1999" name="Gene">
        <title>Hsc40, a new member of the hsp40 family, exhibits similar expression profile to that of hsc70 in mammalian cells.</title>
        <authorList>
            <person name="Chen M.-S."/>
            <person name="Roti J.R."/>
            <person name="Laszlo A."/>
        </authorList>
    </citation>
    <scope>NUCLEOTIDE SEQUENCE [MRNA] (ISOFORM 1)</scope>
    <source>
        <tissue>Colon</tissue>
    </source>
</reference>
<reference key="2">
    <citation type="submission" date="1998-08" db="EMBL/GenBank/DDBJ databases">
        <title>Cloning and expression of a new human cDNA homology to human heat-shock protein 40 mRNA.</title>
        <authorList>
            <person name="Fu Q."/>
            <person name="Yu L."/>
            <person name="Yue P."/>
            <person name="Zhou Y."/>
            <person name="Jiang J.X."/>
            <person name="Zhao S.Y."/>
        </authorList>
    </citation>
    <scope>NUCLEOTIDE SEQUENCE [MRNA] (ISOFORM 1)</scope>
</reference>
<reference key="3">
    <citation type="journal article" date="2004" name="Nat. Genet.">
        <title>Complete sequencing and characterization of 21,243 full-length human cDNAs.</title>
        <authorList>
            <person name="Ota T."/>
            <person name="Suzuki Y."/>
            <person name="Nishikawa T."/>
            <person name="Otsuki T."/>
            <person name="Sugiyama T."/>
            <person name="Irie R."/>
            <person name="Wakamatsu A."/>
            <person name="Hayashi K."/>
            <person name="Sato H."/>
            <person name="Nagai K."/>
            <person name="Kimura K."/>
            <person name="Makita H."/>
            <person name="Sekine M."/>
            <person name="Obayashi M."/>
            <person name="Nishi T."/>
            <person name="Shibahara T."/>
            <person name="Tanaka T."/>
            <person name="Ishii S."/>
            <person name="Yamamoto J."/>
            <person name="Saito K."/>
            <person name="Kawai Y."/>
            <person name="Isono Y."/>
            <person name="Nakamura Y."/>
            <person name="Nagahari K."/>
            <person name="Murakami K."/>
            <person name="Yasuda T."/>
            <person name="Iwayanagi T."/>
            <person name="Wagatsuma M."/>
            <person name="Shiratori A."/>
            <person name="Sudo H."/>
            <person name="Hosoiri T."/>
            <person name="Kaku Y."/>
            <person name="Kodaira H."/>
            <person name="Kondo H."/>
            <person name="Sugawara M."/>
            <person name="Takahashi M."/>
            <person name="Kanda K."/>
            <person name="Yokoi T."/>
            <person name="Furuya T."/>
            <person name="Kikkawa E."/>
            <person name="Omura Y."/>
            <person name="Abe K."/>
            <person name="Kamihara K."/>
            <person name="Katsuta N."/>
            <person name="Sato K."/>
            <person name="Tanikawa M."/>
            <person name="Yamazaki M."/>
            <person name="Ninomiya K."/>
            <person name="Ishibashi T."/>
            <person name="Yamashita H."/>
            <person name="Murakawa K."/>
            <person name="Fujimori K."/>
            <person name="Tanai H."/>
            <person name="Kimata M."/>
            <person name="Watanabe M."/>
            <person name="Hiraoka S."/>
            <person name="Chiba Y."/>
            <person name="Ishida S."/>
            <person name="Ono Y."/>
            <person name="Takiguchi S."/>
            <person name="Watanabe S."/>
            <person name="Yosida M."/>
            <person name="Hotuta T."/>
            <person name="Kusano J."/>
            <person name="Kanehori K."/>
            <person name="Takahashi-Fujii A."/>
            <person name="Hara H."/>
            <person name="Tanase T.-O."/>
            <person name="Nomura Y."/>
            <person name="Togiya S."/>
            <person name="Komai F."/>
            <person name="Hara R."/>
            <person name="Takeuchi K."/>
            <person name="Arita M."/>
            <person name="Imose N."/>
            <person name="Musashino K."/>
            <person name="Yuuki H."/>
            <person name="Oshima A."/>
            <person name="Sasaki N."/>
            <person name="Aotsuka S."/>
            <person name="Yoshikawa Y."/>
            <person name="Matsunawa H."/>
            <person name="Ichihara T."/>
            <person name="Shiohata N."/>
            <person name="Sano S."/>
            <person name="Moriya S."/>
            <person name="Momiyama H."/>
            <person name="Satoh N."/>
            <person name="Takami S."/>
            <person name="Terashima Y."/>
            <person name="Suzuki O."/>
            <person name="Nakagawa S."/>
            <person name="Senoh A."/>
            <person name="Mizoguchi H."/>
            <person name="Goto Y."/>
            <person name="Shimizu F."/>
            <person name="Wakebe H."/>
            <person name="Hishigaki H."/>
            <person name="Watanabe T."/>
            <person name="Sugiyama A."/>
            <person name="Takemoto M."/>
            <person name="Kawakami B."/>
            <person name="Yamazaki M."/>
            <person name="Watanabe K."/>
            <person name="Kumagai A."/>
            <person name="Itakura S."/>
            <person name="Fukuzumi Y."/>
            <person name="Fujimori Y."/>
            <person name="Komiyama M."/>
            <person name="Tashiro H."/>
            <person name="Tanigami A."/>
            <person name="Fujiwara T."/>
            <person name="Ono T."/>
            <person name="Yamada K."/>
            <person name="Fujii Y."/>
            <person name="Ozaki K."/>
            <person name="Hirao M."/>
            <person name="Ohmori Y."/>
            <person name="Kawabata A."/>
            <person name="Hikiji T."/>
            <person name="Kobatake N."/>
            <person name="Inagaki H."/>
            <person name="Ikema Y."/>
            <person name="Okamoto S."/>
            <person name="Okitani R."/>
            <person name="Kawakami T."/>
            <person name="Noguchi S."/>
            <person name="Itoh T."/>
            <person name="Shigeta K."/>
            <person name="Senba T."/>
            <person name="Matsumura K."/>
            <person name="Nakajima Y."/>
            <person name="Mizuno T."/>
            <person name="Morinaga M."/>
            <person name="Sasaki M."/>
            <person name="Togashi T."/>
            <person name="Oyama M."/>
            <person name="Hata H."/>
            <person name="Watanabe M."/>
            <person name="Komatsu T."/>
            <person name="Mizushima-Sugano J."/>
            <person name="Satoh T."/>
            <person name="Shirai Y."/>
            <person name="Takahashi Y."/>
            <person name="Nakagawa K."/>
            <person name="Okumura K."/>
            <person name="Nagase T."/>
            <person name="Nomura N."/>
            <person name="Kikuchi H."/>
            <person name="Masuho Y."/>
            <person name="Yamashita R."/>
            <person name="Nakai K."/>
            <person name="Yada T."/>
            <person name="Nakamura Y."/>
            <person name="Ohara O."/>
            <person name="Isogai T."/>
            <person name="Sugano S."/>
        </authorList>
    </citation>
    <scope>NUCLEOTIDE SEQUENCE [LARGE SCALE MRNA] (ISOFORMS 1 AND 2)</scope>
    <source>
        <tissue>Brain</tissue>
    </source>
</reference>
<reference key="4">
    <citation type="journal article" date="2004" name="Nature">
        <title>DNA sequence and analysis of human chromosome 9.</title>
        <authorList>
            <person name="Humphray S.J."/>
            <person name="Oliver K."/>
            <person name="Hunt A.R."/>
            <person name="Plumb R.W."/>
            <person name="Loveland J.E."/>
            <person name="Howe K.L."/>
            <person name="Andrews T.D."/>
            <person name="Searle S."/>
            <person name="Hunt S.E."/>
            <person name="Scott C.E."/>
            <person name="Jones M.C."/>
            <person name="Ainscough R."/>
            <person name="Almeida J.P."/>
            <person name="Ambrose K.D."/>
            <person name="Ashwell R.I.S."/>
            <person name="Babbage A.K."/>
            <person name="Babbage S."/>
            <person name="Bagguley C.L."/>
            <person name="Bailey J."/>
            <person name="Banerjee R."/>
            <person name="Barker D.J."/>
            <person name="Barlow K.F."/>
            <person name="Bates K."/>
            <person name="Beasley H."/>
            <person name="Beasley O."/>
            <person name="Bird C.P."/>
            <person name="Bray-Allen S."/>
            <person name="Brown A.J."/>
            <person name="Brown J.Y."/>
            <person name="Burford D."/>
            <person name="Burrill W."/>
            <person name="Burton J."/>
            <person name="Carder C."/>
            <person name="Carter N.P."/>
            <person name="Chapman J.C."/>
            <person name="Chen Y."/>
            <person name="Clarke G."/>
            <person name="Clark S.Y."/>
            <person name="Clee C.M."/>
            <person name="Clegg S."/>
            <person name="Collier R.E."/>
            <person name="Corby N."/>
            <person name="Crosier M."/>
            <person name="Cummings A.T."/>
            <person name="Davies J."/>
            <person name="Dhami P."/>
            <person name="Dunn M."/>
            <person name="Dutta I."/>
            <person name="Dyer L.W."/>
            <person name="Earthrowl M.E."/>
            <person name="Faulkner L."/>
            <person name="Fleming C.J."/>
            <person name="Frankish A."/>
            <person name="Frankland J.A."/>
            <person name="French L."/>
            <person name="Fricker D.G."/>
            <person name="Garner P."/>
            <person name="Garnett J."/>
            <person name="Ghori J."/>
            <person name="Gilbert J.G.R."/>
            <person name="Glison C."/>
            <person name="Grafham D.V."/>
            <person name="Gribble S."/>
            <person name="Griffiths C."/>
            <person name="Griffiths-Jones S."/>
            <person name="Grocock R."/>
            <person name="Guy J."/>
            <person name="Hall R.E."/>
            <person name="Hammond S."/>
            <person name="Harley J.L."/>
            <person name="Harrison E.S.I."/>
            <person name="Hart E.A."/>
            <person name="Heath P.D."/>
            <person name="Henderson C.D."/>
            <person name="Hopkins B.L."/>
            <person name="Howard P.J."/>
            <person name="Howden P.J."/>
            <person name="Huckle E."/>
            <person name="Johnson C."/>
            <person name="Johnson D."/>
            <person name="Joy A.A."/>
            <person name="Kay M."/>
            <person name="Keenan S."/>
            <person name="Kershaw J.K."/>
            <person name="Kimberley A.M."/>
            <person name="King A."/>
            <person name="Knights A."/>
            <person name="Laird G.K."/>
            <person name="Langford C."/>
            <person name="Lawlor S."/>
            <person name="Leongamornlert D.A."/>
            <person name="Leversha M."/>
            <person name="Lloyd C."/>
            <person name="Lloyd D.M."/>
            <person name="Lovell J."/>
            <person name="Martin S."/>
            <person name="Mashreghi-Mohammadi M."/>
            <person name="Matthews L."/>
            <person name="McLaren S."/>
            <person name="McLay K.E."/>
            <person name="McMurray A."/>
            <person name="Milne S."/>
            <person name="Nickerson T."/>
            <person name="Nisbett J."/>
            <person name="Nordsiek G."/>
            <person name="Pearce A.V."/>
            <person name="Peck A.I."/>
            <person name="Porter K.M."/>
            <person name="Pandian R."/>
            <person name="Pelan S."/>
            <person name="Phillimore B."/>
            <person name="Povey S."/>
            <person name="Ramsey Y."/>
            <person name="Rand V."/>
            <person name="Scharfe M."/>
            <person name="Sehra H.K."/>
            <person name="Shownkeen R."/>
            <person name="Sims S.K."/>
            <person name="Skuce C.D."/>
            <person name="Smith M."/>
            <person name="Steward C.A."/>
            <person name="Swarbreck D."/>
            <person name="Sycamore N."/>
            <person name="Tester J."/>
            <person name="Thorpe A."/>
            <person name="Tracey A."/>
            <person name="Tromans A."/>
            <person name="Thomas D.W."/>
            <person name="Wall M."/>
            <person name="Wallis J.M."/>
            <person name="West A.P."/>
            <person name="Whitehead S.L."/>
            <person name="Willey D.L."/>
            <person name="Williams S.A."/>
            <person name="Wilming L."/>
            <person name="Wray P.W."/>
            <person name="Young L."/>
            <person name="Ashurst J.L."/>
            <person name="Coulson A."/>
            <person name="Blocker H."/>
            <person name="Durbin R.M."/>
            <person name="Sulston J.E."/>
            <person name="Hubbard T."/>
            <person name="Jackson M.J."/>
            <person name="Bentley D.R."/>
            <person name="Beck S."/>
            <person name="Rogers J."/>
            <person name="Dunham I."/>
        </authorList>
    </citation>
    <scope>NUCLEOTIDE SEQUENCE [LARGE SCALE GENOMIC DNA]</scope>
</reference>
<reference key="5">
    <citation type="submission" date="2005-09" db="EMBL/GenBank/DDBJ databases">
        <authorList>
            <person name="Mural R.J."/>
            <person name="Istrail S."/>
            <person name="Sutton G.G."/>
            <person name="Florea L."/>
            <person name="Halpern A.L."/>
            <person name="Mobarry C.M."/>
            <person name="Lippert R."/>
            <person name="Walenz B."/>
            <person name="Shatkay H."/>
            <person name="Dew I."/>
            <person name="Miller J.R."/>
            <person name="Flanigan M.J."/>
            <person name="Edwards N.J."/>
            <person name="Bolanos R."/>
            <person name="Fasulo D."/>
            <person name="Halldorsson B.V."/>
            <person name="Hannenhalli S."/>
            <person name="Turner R."/>
            <person name="Yooseph S."/>
            <person name="Lu F."/>
            <person name="Nusskern D.R."/>
            <person name="Shue B.C."/>
            <person name="Zheng X.H."/>
            <person name="Zhong F."/>
            <person name="Delcher A.L."/>
            <person name="Huson D.H."/>
            <person name="Kravitz S.A."/>
            <person name="Mouchard L."/>
            <person name="Reinert K."/>
            <person name="Remington K.A."/>
            <person name="Clark A.G."/>
            <person name="Waterman M.S."/>
            <person name="Eichler E.E."/>
            <person name="Adams M.D."/>
            <person name="Hunkapiller M.W."/>
            <person name="Myers E.W."/>
            <person name="Venter J.C."/>
        </authorList>
    </citation>
    <scope>NUCLEOTIDE SEQUENCE [LARGE SCALE GENOMIC DNA]</scope>
</reference>
<reference key="6">
    <citation type="journal article" date="2004" name="Genome Res.">
        <title>The status, quality, and expansion of the NIH full-length cDNA project: the Mammalian Gene Collection (MGC).</title>
        <authorList>
            <consortium name="The MGC Project Team"/>
        </authorList>
    </citation>
    <scope>NUCLEOTIDE SEQUENCE [LARGE SCALE MRNA] (ISOFORM 1)</scope>
    <source>
        <tissue>Skin</tissue>
    </source>
</reference>
<organism>
    <name type="scientific">Homo sapiens</name>
    <name type="common">Human</name>
    <dbReference type="NCBI Taxonomy" id="9606"/>
    <lineage>
        <taxon>Eukaryota</taxon>
        <taxon>Metazoa</taxon>
        <taxon>Chordata</taxon>
        <taxon>Craniata</taxon>
        <taxon>Vertebrata</taxon>
        <taxon>Euteleostomi</taxon>
        <taxon>Mammalia</taxon>
        <taxon>Eutheria</taxon>
        <taxon>Euarchontoglires</taxon>
        <taxon>Primates</taxon>
        <taxon>Haplorrhini</taxon>
        <taxon>Catarrhini</taxon>
        <taxon>Hominidae</taxon>
        <taxon>Homo</taxon>
    </lineage>
</organism>
<dbReference type="EMBL" id="AF088982">
    <property type="protein sequence ID" value="AAC35860.1"/>
    <property type="molecule type" value="mRNA"/>
</dbReference>
<dbReference type="EMBL" id="AF087870">
    <property type="protein sequence ID" value="AAM10498.1"/>
    <property type="molecule type" value="mRNA"/>
</dbReference>
<dbReference type="EMBL" id="AK023253">
    <property type="protein sequence ID" value="BAG51176.1"/>
    <property type="molecule type" value="mRNA"/>
</dbReference>
<dbReference type="EMBL" id="AK299647">
    <property type="protein sequence ID" value="BAG61568.1"/>
    <property type="molecule type" value="mRNA"/>
</dbReference>
<dbReference type="EMBL" id="AL355377">
    <property type="status" value="NOT_ANNOTATED_CDS"/>
    <property type="molecule type" value="Genomic_DNA"/>
</dbReference>
<dbReference type="EMBL" id="CH471071">
    <property type="protein sequence ID" value="EAW58407.1"/>
    <property type="molecule type" value="Genomic_DNA"/>
</dbReference>
<dbReference type="EMBL" id="BC012115">
    <property type="protein sequence ID" value="AAH12115.1"/>
    <property type="status" value="ALT_SEQ"/>
    <property type="molecule type" value="mRNA"/>
</dbReference>
<dbReference type="CCDS" id="CCDS35007.1">
    <molecule id="O75953-3"/>
</dbReference>
<dbReference type="CCDS" id="CCDS47959.1">
    <molecule id="O75953-4"/>
</dbReference>
<dbReference type="RefSeq" id="NP_001128476.2">
    <property type="nucleotide sequence ID" value="NM_001135004.2"/>
</dbReference>
<dbReference type="RefSeq" id="NP_001128477.1">
    <molecule id="O75953-4"/>
    <property type="nucleotide sequence ID" value="NM_001135005.3"/>
</dbReference>
<dbReference type="RefSeq" id="NP_001336652.1">
    <molecule id="O75953-4"/>
    <property type="nucleotide sequence ID" value="NM_001349723.3"/>
</dbReference>
<dbReference type="RefSeq" id="NP_001336653.1">
    <molecule id="O75953-3"/>
    <property type="nucleotide sequence ID" value="NM_001349724.2"/>
</dbReference>
<dbReference type="RefSeq" id="NP_036398.3">
    <molecule id="O75953-3"/>
    <property type="nucleotide sequence ID" value="NM_012266.5"/>
</dbReference>
<dbReference type="RefSeq" id="XP_005251485.1">
    <property type="nucleotide sequence ID" value="XM_005251428.3"/>
</dbReference>
<dbReference type="RefSeq" id="XP_006716814.1">
    <property type="nucleotide sequence ID" value="XM_006716751.2"/>
</dbReference>
<dbReference type="RefSeq" id="XP_011516144.1">
    <property type="nucleotide sequence ID" value="XM_011517842.2"/>
</dbReference>
<dbReference type="SMR" id="O75953"/>
<dbReference type="BioGRID" id="117350">
    <property type="interactions" value="117"/>
</dbReference>
<dbReference type="FunCoup" id="O75953">
    <property type="interactions" value="1246"/>
</dbReference>
<dbReference type="IntAct" id="O75953">
    <property type="interactions" value="65"/>
</dbReference>
<dbReference type="MINT" id="O75953"/>
<dbReference type="STRING" id="9606.ENSP00000404079"/>
<dbReference type="iPTMnet" id="O75953"/>
<dbReference type="PhosphoSitePlus" id="O75953"/>
<dbReference type="BioMuta" id="DNAJB5"/>
<dbReference type="jPOST" id="O75953"/>
<dbReference type="MassIVE" id="O75953"/>
<dbReference type="PaxDb" id="9606-ENSP00000404079"/>
<dbReference type="PeptideAtlas" id="O75953"/>
<dbReference type="ProteomicsDB" id="50319">
    <molecule id="O75953-3"/>
</dbReference>
<dbReference type="Pumba" id="O75953"/>
<dbReference type="Antibodypedia" id="11397">
    <property type="antibodies" value="187 antibodies from 27 providers"/>
</dbReference>
<dbReference type="DNASU" id="25822"/>
<dbReference type="Ensembl" id="ENST00000312316.9">
    <molecule id="O75953-3"/>
    <property type="protein sequence ID" value="ENSP00000312517.5"/>
    <property type="gene ID" value="ENSG00000137094.16"/>
</dbReference>
<dbReference type="Ensembl" id="ENST00000454002.6">
    <molecule id="O75953-4"/>
    <property type="protein sequence ID" value="ENSP00000413684.2"/>
    <property type="gene ID" value="ENSG00000137094.16"/>
</dbReference>
<dbReference type="Ensembl" id="ENST00000545841.5">
    <molecule id="O75953-3"/>
    <property type="protein sequence ID" value="ENSP00000441999.1"/>
    <property type="gene ID" value="ENSG00000137094.16"/>
</dbReference>
<dbReference type="Ensembl" id="ENST00000682809.1">
    <molecule id="O75953-4"/>
    <property type="protein sequence ID" value="ENSP00000507741.1"/>
    <property type="gene ID" value="ENSG00000137094.16"/>
</dbReference>
<dbReference type="Ensembl" id="ENST00000684748.1">
    <molecule id="O75953-3"/>
    <property type="protein sequence ID" value="ENSP00000506753.1"/>
    <property type="gene ID" value="ENSG00000137094.16"/>
</dbReference>
<dbReference type="GeneID" id="25822"/>
<dbReference type="KEGG" id="hsa:25822"/>
<dbReference type="MANE-Select" id="ENST00000682809.1">
    <molecule id="O75953-4"/>
    <property type="protein sequence ID" value="ENSP00000507741.1"/>
    <property type="RefSeq nucleotide sequence ID" value="NM_001349723.3"/>
    <property type="RefSeq protein sequence ID" value="NP_001336652.1"/>
</dbReference>
<dbReference type="UCSC" id="uc003zvs.5">
    <molecule id="O75953-3"/>
    <property type="organism name" value="human"/>
</dbReference>
<dbReference type="AGR" id="HGNC:14887"/>
<dbReference type="CTD" id="25822"/>
<dbReference type="DisGeNET" id="25822"/>
<dbReference type="GeneCards" id="DNAJB5"/>
<dbReference type="HGNC" id="HGNC:14887">
    <property type="gene designation" value="DNAJB5"/>
</dbReference>
<dbReference type="HPA" id="ENSG00000137094">
    <property type="expression patterns" value="Tissue enhanced (skeletal muscle, tongue)"/>
</dbReference>
<dbReference type="MIM" id="611328">
    <property type="type" value="gene"/>
</dbReference>
<dbReference type="neXtProt" id="NX_O75953"/>
<dbReference type="OpenTargets" id="ENSG00000137094"/>
<dbReference type="PharmGKB" id="PA27417"/>
<dbReference type="VEuPathDB" id="HostDB:ENSG00000137094"/>
<dbReference type="eggNOG" id="KOG0714">
    <property type="taxonomic scope" value="Eukaryota"/>
</dbReference>
<dbReference type="GeneTree" id="ENSGT00940000156090"/>
<dbReference type="HOGENOM" id="CLU_017633_0_0_1"/>
<dbReference type="InParanoid" id="O75953"/>
<dbReference type="OMA" id="IVFHIVE"/>
<dbReference type="OrthoDB" id="550424at2759"/>
<dbReference type="PAN-GO" id="O75953">
    <property type="GO annotations" value="4 GO annotations based on evolutionary models"/>
</dbReference>
<dbReference type="PhylomeDB" id="O75953"/>
<dbReference type="TreeFam" id="TF105141"/>
<dbReference type="PathwayCommons" id="O75953"/>
<dbReference type="SignaLink" id="O75953"/>
<dbReference type="BioGRID-ORCS" id="25822">
    <property type="hits" value="11 hits in 1147 CRISPR screens"/>
</dbReference>
<dbReference type="CD-CODE" id="91857CE7">
    <property type="entry name" value="Nucleolus"/>
</dbReference>
<dbReference type="ChiTaRS" id="DNAJB5">
    <property type="organism name" value="human"/>
</dbReference>
<dbReference type="GenomeRNAi" id="25822"/>
<dbReference type="Pharos" id="O75953">
    <property type="development level" value="Tbio"/>
</dbReference>
<dbReference type="PRO" id="PR:O75953"/>
<dbReference type="Proteomes" id="UP000005640">
    <property type="component" value="Chromosome 9"/>
</dbReference>
<dbReference type="RNAct" id="O75953">
    <property type="molecule type" value="protein"/>
</dbReference>
<dbReference type="Bgee" id="ENSG00000137094">
    <property type="expression patterns" value="Expressed in hindlimb stylopod muscle and 167 other cell types or tissues"/>
</dbReference>
<dbReference type="ExpressionAtlas" id="O75953">
    <property type="expression patterns" value="baseline and differential"/>
</dbReference>
<dbReference type="GO" id="GO:0005829">
    <property type="term" value="C:cytosol"/>
    <property type="evidence" value="ECO:0000314"/>
    <property type="project" value="UniProtKB"/>
</dbReference>
<dbReference type="GO" id="GO:0005634">
    <property type="term" value="C:nucleus"/>
    <property type="evidence" value="ECO:0007669"/>
    <property type="project" value="Ensembl"/>
</dbReference>
<dbReference type="GO" id="GO:0051087">
    <property type="term" value="F:protein-folding chaperone binding"/>
    <property type="evidence" value="ECO:0000353"/>
    <property type="project" value="UniProtKB"/>
</dbReference>
<dbReference type="GO" id="GO:0051082">
    <property type="term" value="F:unfolded protein binding"/>
    <property type="evidence" value="ECO:0000318"/>
    <property type="project" value="GO_Central"/>
</dbReference>
<dbReference type="GO" id="GO:0051085">
    <property type="term" value="P:chaperone cofactor-dependent protein refolding"/>
    <property type="evidence" value="ECO:0000318"/>
    <property type="project" value="GO_Central"/>
</dbReference>
<dbReference type="GO" id="GO:0000122">
    <property type="term" value="P:negative regulation of transcription by RNA polymerase II"/>
    <property type="evidence" value="ECO:0007669"/>
    <property type="project" value="Ensembl"/>
</dbReference>
<dbReference type="GO" id="GO:0006986">
    <property type="term" value="P:response to unfolded protein"/>
    <property type="evidence" value="ECO:0000270"/>
    <property type="project" value="UniProtKB"/>
</dbReference>
<dbReference type="CDD" id="cd06257">
    <property type="entry name" value="DnaJ"/>
    <property type="match status" value="1"/>
</dbReference>
<dbReference type="CDD" id="cd10747">
    <property type="entry name" value="DnaJ_C"/>
    <property type="match status" value="1"/>
</dbReference>
<dbReference type="FunFam" id="1.10.287.110:FF:000005">
    <property type="entry name" value="DnaJ (Hsp40) homolog, subfamily B, member 4"/>
    <property type="match status" value="1"/>
</dbReference>
<dbReference type="FunFam" id="2.60.260.20:FF:000002">
    <property type="entry name" value="Dnaj homolog subfamily b member"/>
    <property type="match status" value="1"/>
</dbReference>
<dbReference type="FunFam" id="2.60.260.20:FF:000007">
    <property type="entry name" value="dnaJ homolog subfamily B member 5"/>
    <property type="match status" value="1"/>
</dbReference>
<dbReference type="Gene3D" id="1.10.287.110">
    <property type="entry name" value="DnaJ domain"/>
    <property type="match status" value="1"/>
</dbReference>
<dbReference type="Gene3D" id="2.60.260.20">
    <property type="entry name" value="Urease metallochaperone UreE, N-terminal domain"/>
    <property type="match status" value="2"/>
</dbReference>
<dbReference type="InterPro" id="IPR002939">
    <property type="entry name" value="DnaJ_C"/>
</dbReference>
<dbReference type="InterPro" id="IPR001623">
    <property type="entry name" value="DnaJ_domain"/>
</dbReference>
<dbReference type="InterPro" id="IPR018253">
    <property type="entry name" value="DnaJ_domain_CS"/>
</dbReference>
<dbReference type="InterPro" id="IPR051339">
    <property type="entry name" value="DnaJ_subfamily_B"/>
</dbReference>
<dbReference type="InterPro" id="IPR008971">
    <property type="entry name" value="HSP40/DnaJ_pept-bd"/>
</dbReference>
<dbReference type="InterPro" id="IPR036869">
    <property type="entry name" value="J_dom_sf"/>
</dbReference>
<dbReference type="PANTHER" id="PTHR24078:SF553">
    <property type="entry name" value="DNAJ HOMOLOG SUBFAMILY B MEMBER 5"/>
    <property type="match status" value="1"/>
</dbReference>
<dbReference type="PANTHER" id="PTHR24078">
    <property type="entry name" value="DNAJ HOMOLOG SUBFAMILY C MEMBER"/>
    <property type="match status" value="1"/>
</dbReference>
<dbReference type="Pfam" id="PF00226">
    <property type="entry name" value="DnaJ"/>
    <property type="match status" value="1"/>
</dbReference>
<dbReference type="Pfam" id="PF01556">
    <property type="entry name" value="DnaJ_C"/>
    <property type="match status" value="1"/>
</dbReference>
<dbReference type="PRINTS" id="PR00625">
    <property type="entry name" value="JDOMAIN"/>
</dbReference>
<dbReference type="SMART" id="SM00271">
    <property type="entry name" value="DnaJ"/>
    <property type="match status" value="1"/>
</dbReference>
<dbReference type="SUPFAM" id="SSF46565">
    <property type="entry name" value="Chaperone J-domain"/>
    <property type="match status" value="1"/>
</dbReference>
<dbReference type="SUPFAM" id="SSF49493">
    <property type="entry name" value="HSP40/DnaJ peptide-binding domain"/>
    <property type="match status" value="2"/>
</dbReference>
<dbReference type="PROSITE" id="PS00636">
    <property type="entry name" value="DNAJ_1"/>
    <property type="match status" value="1"/>
</dbReference>
<dbReference type="PROSITE" id="PS50076">
    <property type="entry name" value="DNAJ_2"/>
    <property type="match status" value="1"/>
</dbReference>
<comment type="interaction">
    <interactant intactId="EBI-5655937">
        <id>O75953</id>
    </interactant>
    <interactant intactId="EBI-766279">
        <id>O00555</id>
        <label>CACNA1A</label>
    </interactant>
    <organismsDiffer>false</organismsDiffer>
    <experiments>2</experiments>
</comment>
<comment type="interaction">
    <interactant intactId="EBI-5655937">
        <id>O75953</id>
    </interactant>
    <interactant intactId="EBI-681210">
        <id>Q8WZ42</id>
        <label>TTN</label>
    </interactant>
    <organismsDiffer>false</organismsDiffer>
    <experiments>4</experiments>
</comment>
<comment type="interaction">
    <interactant intactId="EBI-5655937">
        <id>O75953</id>
    </interactant>
    <interactant intactId="EBI-1185167">
        <id>Q8AZK7</id>
        <label>EBNA-LP</label>
    </interactant>
    <organismsDiffer>true</organismsDiffer>
    <experiments>3</experiments>
</comment>
<comment type="alternative products">
    <event type="alternative splicing"/>
    <isoform>
        <id>O75953-3</id>
        <name>1</name>
        <sequence type="displayed"/>
    </isoform>
    <isoform>
        <id>O75953-4</id>
        <name>2</name>
        <sequence type="described" ref="VSP_046223"/>
    </isoform>
    <isoform>
        <id>O75953-5</id>
        <name>3</name>
        <sequence type="described" ref="VSP_047250"/>
    </isoform>
</comment>
<comment type="induction">
    <text>Expressed under normal conditions, its expression can further be increased after various stress treatments.</text>
</comment>
<comment type="sequence caution" evidence="3">
    <conflict type="miscellaneous discrepancy">
        <sequence resource="EMBL-CDS" id="AAH12115"/>
    </conflict>
    <text>Unlikely isoform. Aberrant splice sites.</text>
</comment>
<feature type="chain" id="PRO_0000071023" description="DnaJ homolog subfamily B member 5">
    <location>
        <begin position="1"/>
        <end position="348"/>
    </location>
</feature>
<feature type="domain" description="J" evidence="1">
    <location>
        <begin position="4"/>
        <end position="68"/>
    </location>
</feature>
<feature type="splice variant" id="VSP_046223" description="In isoform 2." evidence="2">
    <original>M</original>
    <variation>MFKRTVLSCPPPAAPPLQARGAFRSFPHSWGEDFLASLMFKIQLEPLKLRAWTLNGFVKFRNKETSAGPVAVM</variation>
    <location>
        <position position="1"/>
    </location>
</feature>
<feature type="splice variant" id="VSP_047250" description="In isoform 3." evidence="3">
    <original>M</original>
    <variation>MGGAEAEPWGRAPGPAIGGRRAGDSCPGWRRRSRSRGRGQRLSHGPRRRPQLLTAAPPLQARGAFRSFPHSWGEDFLASLMFKIQLEPLKLRAWTLNGFVKFRNKETSAGPVAVM</variation>
    <location>
        <position position="1"/>
    </location>
</feature>
<feature type="sequence conflict" description="In Ref. 2; AAM10498." evidence="3" ref="2">
    <original>MKITRRR</original>
    <variation>IEDHKAS</variation>
    <location>
        <begin position="190"/>
        <end position="196"/>
    </location>
</feature>
<feature type="sequence conflict" description="In Ref. 2; AAM10498." evidence="3" ref="2">
    <original>TP</original>
    <variation>HL</variation>
    <location>
        <begin position="234"/>
        <end position="235"/>
    </location>
</feature>
<keyword id="KW-0025">Alternative splicing</keyword>
<keyword id="KW-0143">Chaperone</keyword>
<keyword id="KW-1267">Proteomics identification</keyword>
<keyword id="KW-1185">Reference proteome</keyword>
<name>DNJB5_HUMAN</name>
<gene>
    <name type="primary">DNAJB5</name>
    <name type="synonym">HSC40</name>
</gene>
<protein>
    <recommendedName>
        <fullName>DnaJ homolog subfamily B member 5</fullName>
    </recommendedName>
    <alternativeName>
        <fullName>Heat shock protein Hsp40-2</fullName>
    </alternativeName>
    <alternativeName>
        <fullName>Heat shock protein Hsp40-3</fullName>
    </alternativeName>
    <alternativeName>
        <fullName>Heat shock protein cognate 40</fullName>
        <shortName>Hsc40</shortName>
    </alternativeName>
</protein>
<evidence type="ECO:0000255" key="1">
    <source>
        <dbReference type="PROSITE-ProRule" id="PRU00286"/>
    </source>
</evidence>
<evidence type="ECO:0000303" key="2">
    <source>
    </source>
</evidence>
<evidence type="ECO:0000305" key="3"/>
<accession>O75953</accession>
<accession>B3KN14</accession>
<accession>B4DSA6</accession>
<accession>J3KQM9</accession>
<accession>J3KR08</accession>
<accession>Q5T656</accession>
<accession>Q8TDR7</accession>
<accession>Q96EM4</accession>